<keyword id="KW-0002">3D-structure</keyword>
<keyword id="KW-0997">Cell inner membrane</keyword>
<keyword id="KW-1003">Cell membrane</keyword>
<keyword id="KW-0963">Cytoplasm</keyword>
<keyword id="KW-0378">Hydrolase</keyword>
<keyword id="KW-0441">Lipid A biosynthesis</keyword>
<keyword id="KW-0444">Lipid biosynthesis</keyword>
<keyword id="KW-0443">Lipid metabolism</keyword>
<keyword id="KW-0464">Manganese</keyword>
<keyword id="KW-0472">Membrane</keyword>
<keyword id="KW-0479">Metal-binding</keyword>
<keyword id="KW-1185">Reference proteome</keyword>
<organism>
    <name type="scientific">Haemophilus influenzae (strain ATCC 51907 / DSM 11121 / KW20 / Rd)</name>
    <dbReference type="NCBI Taxonomy" id="71421"/>
    <lineage>
        <taxon>Bacteria</taxon>
        <taxon>Pseudomonadati</taxon>
        <taxon>Pseudomonadota</taxon>
        <taxon>Gammaproteobacteria</taxon>
        <taxon>Pasteurellales</taxon>
        <taxon>Pasteurellaceae</taxon>
        <taxon>Haemophilus</taxon>
    </lineage>
</organism>
<dbReference type="EC" id="3.6.1.54" evidence="1 2"/>
<dbReference type="EMBL" id="L42023">
    <property type="protein sequence ID" value="AAC22394.1"/>
    <property type="molecule type" value="Genomic_DNA"/>
</dbReference>
<dbReference type="PIR" id="A64013">
    <property type="entry name" value="A64013"/>
</dbReference>
<dbReference type="RefSeq" id="NP_438894.1">
    <property type="nucleotide sequence ID" value="NC_000907.1"/>
</dbReference>
<dbReference type="PDB" id="5K8K">
    <property type="method" value="X-ray"/>
    <property type="resolution" value="2.55 A"/>
    <property type="chains" value="A=1-237"/>
</dbReference>
<dbReference type="PDBsum" id="5K8K"/>
<dbReference type="SMR" id="P44046"/>
<dbReference type="STRING" id="71421.HI_0735"/>
<dbReference type="DNASU" id="950740"/>
<dbReference type="EnsemblBacteria" id="AAC22394">
    <property type="protein sequence ID" value="AAC22394"/>
    <property type="gene ID" value="HI_0735"/>
</dbReference>
<dbReference type="KEGG" id="hin:HI_0735"/>
<dbReference type="PATRIC" id="fig|71421.8.peg.769"/>
<dbReference type="eggNOG" id="COG2908">
    <property type="taxonomic scope" value="Bacteria"/>
</dbReference>
<dbReference type="HOGENOM" id="CLU_074586_0_0_6"/>
<dbReference type="OrthoDB" id="9783283at2"/>
<dbReference type="PhylomeDB" id="P44046"/>
<dbReference type="BioCyc" id="HINF71421:G1GJ1-773-MONOMER"/>
<dbReference type="BRENDA" id="3.6.1.54">
    <property type="organism ID" value="2529"/>
</dbReference>
<dbReference type="UniPathway" id="UPA00359">
    <property type="reaction ID" value="UER00480"/>
</dbReference>
<dbReference type="Proteomes" id="UP000000579">
    <property type="component" value="Chromosome"/>
</dbReference>
<dbReference type="GO" id="GO:0005737">
    <property type="term" value="C:cytoplasm"/>
    <property type="evidence" value="ECO:0007669"/>
    <property type="project" value="UniProtKB-SubCell"/>
</dbReference>
<dbReference type="GO" id="GO:0019897">
    <property type="term" value="C:extrinsic component of plasma membrane"/>
    <property type="evidence" value="ECO:0007669"/>
    <property type="project" value="UniProtKB-UniRule"/>
</dbReference>
<dbReference type="GO" id="GO:0030145">
    <property type="term" value="F:manganese ion binding"/>
    <property type="evidence" value="ECO:0000314"/>
    <property type="project" value="UniProtKB"/>
</dbReference>
<dbReference type="GO" id="GO:0008758">
    <property type="term" value="F:UDP-2,3-diacylglucosamine hydrolase activity"/>
    <property type="evidence" value="ECO:0000314"/>
    <property type="project" value="UniProtKB"/>
</dbReference>
<dbReference type="GO" id="GO:0009245">
    <property type="term" value="P:lipid A biosynthetic process"/>
    <property type="evidence" value="ECO:0000318"/>
    <property type="project" value="GO_Central"/>
</dbReference>
<dbReference type="CDD" id="cd07398">
    <property type="entry name" value="MPP_YbbF-LpxH"/>
    <property type="match status" value="1"/>
</dbReference>
<dbReference type="Gene3D" id="3.60.21.10">
    <property type="match status" value="1"/>
</dbReference>
<dbReference type="HAMAP" id="MF_00575">
    <property type="entry name" value="LpxH"/>
    <property type="match status" value="1"/>
</dbReference>
<dbReference type="InterPro" id="IPR004843">
    <property type="entry name" value="Calcineurin-like_PHP_ApaH"/>
</dbReference>
<dbReference type="InterPro" id="IPR043461">
    <property type="entry name" value="LpxH-like"/>
</dbReference>
<dbReference type="InterPro" id="IPR029052">
    <property type="entry name" value="Metallo-depent_PP-like"/>
</dbReference>
<dbReference type="InterPro" id="IPR010138">
    <property type="entry name" value="UDP-diacylglucosamine_Hdrlase"/>
</dbReference>
<dbReference type="NCBIfam" id="TIGR01854">
    <property type="entry name" value="lipid_A_lpxH"/>
    <property type="match status" value="1"/>
</dbReference>
<dbReference type="NCBIfam" id="NF003743">
    <property type="entry name" value="PRK05340.1"/>
    <property type="match status" value="1"/>
</dbReference>
<dbReference type="PANTHER" id="PTHR34990:SF1">
    <property type="entry name" value="UDP-2,3-DIACYLGLUCOSAMINE HYDROLASE"/>
    <property type="match status" value="1"/>
</dbReference>
<dbReference type="PANTHER" id="PTHR34990">
    <property type="entry name" value="UDP-2,3-DIACYLGLUCOSAMINE HYDROLASE-RELATED"/>
    <property type="match status" value="1"/>
</dbReference>
<dbReference type="Pfam" id="PF00149">
    <property type="entry name" value="Metallophos"/>
    <property type="match status" value="1"/>
</dbReference>
<dbReference type="SUPFAM" id="SSF56300">
    <property type="entry name" value="Metallo-dependent phosphatases"/>
    <property type="match status" value="1"/>
</dbReference>
<feature type="chain" id="PRO_0000214112" description="UDP-2,3-diacylglucosamine hydrolase">
    <location>
        <begin position="1"/>
        <end position="237"/>
    </location>
</feature>
<feature type="binding site" evidence="1 3">
    <location>
        <position position="9"/>
    </location>
    <ligand>
        <name>Mn(2+)</name>
        <dbReference type="ChEBI" id="CHEBI:29035"/>
        <label>1</label>
    </ligand>
</feature>
<feature type="binding site" evidence="1 3">
    <location>
        <position position="11"/>
    </location>
    <ligand>
        <name>Mn(2+)</name>
        <dbReference type="ChEBI" id="CHEBI:29035"/>
        <label>1</label>
    </ligand>
</feature>
<feature type="binding site" evidence="1 3">
    <location>
        <position position="42"/>
    </location>
    <ligand>
        <name>Mn(2+)</name>
        <dbReference type="ChEBI" id="CHEBI:29035"/>
        <label>1</label>
    </ligand>
</feature>
<feature type="binding site" evidence="1 3">
    <location>
        <position position="42"/>
    </location>
    <ligand>
        <name>Mn(2+)</name>
        <dbReference type="ChEBI" id="CHEBI:29035"/>
        <label>2</label>
    </ligand>
</feature>
<feature type="binding site" evidence="1 6">
    <location>
        <begin position="80"/>
        <end position="81"/>
    </location>
    <ligand>
        <name>substrate</name>
    </ligand>
</feature>
<feature type="binding site" evidence="1 3">
    <location>
        <position position="80"/>
    </location>
    <ligand>
        <name>Mn(2+)</name>
        <dbReference type="ChEBI" id="CHEBI:29035"/>
        <label>2</label>
    </ligand>
</feature>
<feature type="binding site" evidence="1 3">
    <location>
        <position position="115"/>
    </location>
    <ligand>
        <name>Mn(2+)</name>
        <dbReference type="ChEBI" id="CHEBI:29035"/>
        <label>2</label>
    </ligand>
</feature>
<feature type="binding site" evidence="1 6">
    <location>
        <position position="123"/>
    </location>
    <ligand>
        <name>substrate</name>
    </ligand>
</feature>
<feature type="binding site" evidence="1 6">
    <location>
        <position position="161"/>
    </location>
    <ligand>
        <name>substrate</name>
    </ligand>
</feature>
<feature type="binding site" evidence="1 6">
    <location>
        <position position="165"/>
    </location>
    <ligand>
        <name>substrate</name>
    </ligand>
</feature>
<feature type="binding site" evidence="1 6">
    <location>
        <position position="168"/>
    </location>
    <ligand>
        <name>substrate</name>
    </ligand>
</feature>
<feature type="binding site" evidence="1 3">
    <location>
        <position position="196"/>
    </location>
    <ligand>
        <name>Mn(2+)</name>
        <dbReference type="ChEBI" id="CHEBI:29035"/>
        <label>2</label>
    </ligand>
</feature>
<feature type="binding site" evidence="1 6">
    <location>
        <position position="196"/>
    </location>
    <ligand>
        <name>substrate</name>
    </ligand>
</feature>
<feature type="binding site" evidence="1">
    <location>
        <position position="198"/>
    </location>
    <ligand>
        <name>Mn(2+)</name>
        <dbReference type="ChEBI" id="CHEBI:29035"/>
        <label>1</label>
    </ligand>
</feature>
<feature type="mutagenesis site" description="230000-fold decrease in catalytic activity." evidence="2">
    <original>D</original>
    <variation>A</variation>
    <location>
        <position position="9"/>
    </location>
</feature>
<feature type="mutagenesis site" description="17000-fold decrease in catalytic activity." evidence="2">
    <original>H</original>
    <variation>A</variation>
    <location>
        <position position="11"/>
    </location>
</feature>
<feature type="mutagenesis site" description="80000-fold decrease in catalytic activity." evidence="2">
    <original>D</original>
    <variation>A</variation>
    <location>
        <position position="42"/>
    </location>
</feature>
<feature type="mutagenesis site" description="7000-fold decrease in catalytic activity." evidence="2">
    <original>R</original>
    <variation>A</variation>
    <location>
        <position position="81"/>
    </location>
</feature>
<feature type="mutagenesis site" description="12000-fold decrease in catalytic activity." evidence="2">
    <original>H</original>
    <variation>A</variation>
    <location>
        <position position="115"/>
    </location>
</feature>
<feature type="mutagenesis site" description="2-fold decrease in catalytic activity." evidence="2">
    <original>D</original>
    <variation>A</variation>
    <location>
        <position position="117"/>
    </location>
</feature>
<feature type="mutagenesis site" description="5000-fold decrease in catalytic activity." evidence="2">
    <original>H</original>
    <variation>A</variation>
    <location>
        <position position="196"/>
    </location>
</feature>
<feature type="strand" evidence="7">
    <location>
        <begin position="3"/>
        <end position="7"/>
    </location>
</feature>
<feature type="helix" evidence="7">
    <location>
        <begin position="17"/>
        <end position="29"/>
    </location>
</feature>
<feature type="helix" evidence="7">
    <location>
        <begin position="31"/>
        <end position="33"/>
    </location>
</feature>
<feature type="strand" evidence="7">
    <location>
        <begin position="35"/>
        <end position="41"/>
    </location>
</feature>
<feature type="helix" evidence="7">
    <location>
        <begin position="55"/>
        <end position="69"/>
    </location>
</feature>
<feature type="strand" evidence="7">
    <location>
        <begin position="73"/>
        <end position="77"/>
    </location>
</feature>
<feature type="strand" evidence="7">
    <location>
        <begin position="80"/>
        <end position="82"/>
    </location>
</feature>
<feature type="helix" evidence="7">
    <location>
        <begin position="87"/>
        <end position="93"/>
    </location>
</feature>
<feature type="strand" evidence="7">
    <location>
        <begin position="96"/>
        <end position="98"/>
    </location>
</feature>
<feature type="strand" evidence="7">
    <location>
        <begin position="100"/>
        <end position="106"/>
    </location>
</feature>
<feature type="strand" evidence="7">
    <location>
        <begin position="109"/>
        <end position="114"/>
    </location>
</feature>
<feature type="helix" evidence="7">
    <location>
        <begin position="117"/>
        <end position="119"/>
    </location>
</feature>
<feature type="helix" evidence="7">
    <location>
        <begin position="124"/>
        <end position="133"/>
    </location>
</feature>
<feature type="helix" evidence="7">
    <location>
        <begin position="136"/>
        <end position="144"/>
    </location>
</feature>
<feature type="helix" evidence="7">
    <location>
        <begin position="147"/>
        <end position="166"/>
    </location>
</feature>
<feature type="helix" evidence="7">
    <location>
        <begin position="171"/>
        <end position="173"/>
    </location>
</feature>
<feature type="helix" evidence="7">
    <location>
        <begin position="177"/>
        <end position="187"/>
    </location>
</feature>
<feature type="strand" evidence="7">
    <location>
        <begin position="190"/>
        <end position="194"/>
    </location>
</feature>
<feature type="strand" evidence="7">
    <location>
        <begin position="201"/>
        <end position="204"/>
    </location>
</feature>
<feature type="strand" evidence="7">
    <location>
        <begin position="209"/>
        <end position="212"/>
    </location>
</feature>
<feature type="strand" evidence="7">
    <location>
        <begin position="224"/>
        <end position="227"/>
    </location>
</feature>
<feature type="strand" evidence="7">
    <location>
        <begin position="232"/>
        <end position="234"/>
    </location>
</feature>
<gene>
    <name evidence="1 4" type="primary">lpxH</name>
    <name type="ordered locus">HI_0735</name>
</gene>
<proteinExistence type="evidence at protein level"/>
<comment type="function">
    <text evidence="1 2">Hydrolyzes the pyrophosphate bond of UDP-2,3-diacylglucosamine to yield 2,3-diacylglucosamine 1-phosphate (lipid X) and UMP by catalyzing the attack of water at the alpha-P atom. Involved in the biosynthesis of lipid A, a phosphorylated glycolipid that anchors the lipopolysaccharide to the outer membrane of the cell.</text>
</comment>
<comment type="catalytic activity">
    <reaction evidence="1 2">
        <text>UDP-2-N,3-O-bis[(3R)-3-hydroxytetradecanoyl]-alpha-D-glucosamine + H2O = 2-N,3-O-bis[(3R)-3-hydroxytetradecanoyl]-alpha-D-glucosaminyl 1-phosphate + UMP + 2 H(+)</text>
        <dbReference type="Rhea" id="RHEA:25213"/>
        <dbReference type="ChEBI" id="CHEBI:15377"/>
        <dbReference type="ChEBI" id="CHEBI:15378"/>
        <dbReference type="ChEBI" id="CHEBI:57865"/>
        <dbReference type="ChEBI" id="CHEBI:57957"/>
        <dbReference type="ChEBI" id="CHEBI:78847"/>
        <dbReference type="EC" id="3.6.1.54"/>
    </reaction>
</comment>
<comment type="cofactor">
    <cofactor evidence="2 3">
        <name>Mn(2+)</name>
        <dbReference type="ChEBI" id="CHEBI:29035"/>
    </cofactor>
    <text evidence="2 3">Binds 2 Mn(2+) ions per subunit in a binuclear metal center (PubMed:23897835, PubMed:27780190). May bind a third metal with significantly weaker affinity that might facilitate the catalysis but only binds LpxH in the presence of the substrate (PubMed:23897835).</text>
</comment>
<comment type="biophysicochemical properties">
    <kinetics>
        <KM evidence="2">79.4 uM for UDP-2-N,3-O-bis((3R)-3-hydroxytetradecanoyl)-alpha-D-glucosamine</KM>
        <Vmax evidence="2">18.1 mmol/min/mg enzyme</Vmax>
    </kinetics>
    <phDependence>
        <text evidence="2">Optimum pH is 7-9.5. Is most active at slightly alkaline pH values and exhibits a sharp decrease in its catalytic activity at low pH. The drop in LpxH activity at acidic pH is not due to enzyme instability as preincubation of the enzyme at low pH does not alter the apparent enzyme activity at the standard condition of pH 8.0.</text>
    </phDependence>
</comment>
<comment type="pathway">
    <text evidence="1 5">Glycolipid biosynthesis; lipid IV(A) biosynthesis; lipid IV(A) from (3R)-3-hydroxytetradecanoyl-[acyl-carrier-protein] and UDP-N-acetyl-alpha-D-glucosamine: step 4/6.</text>
</comment>
<comment type="subcellular location">
    <subcellularLocation>
        <location evidence="5">Cell inner membrane</location>
        <topology evidence="2">Peripheral membrane protein</topology>
        <orientation evidence="5">Cytoplasmic side</orientation>
    </subcellularLocation>
    <subcellularLocation>
        <location evidence="2">Cytoplasm</location>
    </subcellularLocation>
</comment>
<comment type="similarity">
    <text evidence="1">Belongs to the LpxH family.</text>
</comment>
<evidence type="ECO:0000255" key="1">
    <source>
        <dbReference type="HAMAP-Rule" id="MF_00575"/>
    </source>
</evidence>
<evidence type="ECO:0000269" key="2">
    <source>
    </source>
</evidence>
<evidence type="ECO:0000269" key="3">
    <source>
    </source>
</evidence>
<evidence type="ECO:0000303" key="4">
    <source>
    </source>
</evidence>
<evidence type="ECO:0000305" key="5">
    <source>
    </source>
</evidence>
<evidence type="ECO:0000305" key="6">
    <source>
    </source>
</evidence>
<evidence type="ECO:0007829" key="7">
    <source>
        <dbReference type="PDB" id="5K8K"/>
    </source>
</evidence>
<name>LPXH_HAEIN</name>
<sequence length="237" mass="27786">MKHSYFISDLHLSETQPELTALFVDFMQNLAPQAERLYILGDLFDFWIGDDEQSALIQQVKDLIKFVSDQGVQCYFQHGNRDFLIGERFSKETGAQLLPDYQLITLYDKKILLCHGDTLCIDDEAYQQFRRRVHQKWLQRLFLCLPLKVRVIIAEKIRAKSNQDKQAKSQEIMDVNQAFTAEKVQEFGVNLLIHGHTHREAIHQQEEFTRIVLGDWRKNYASILKMDESGEFGFIKD</sequence>
<accession>P44046</accession>
<reference key="1">
    <citation type="journal article" date="1995" name="Science">
        <title>Whole-genome random sequencing and assembly of Haemophilus influenzae Rd.</title>
        <authorList>
            <person name="Fleischmann R.D."/>
            <person name="Adams M.D."/>
            <person name="White O."/>
            <person name="Clayton R.A."/>
            <person name="Kirkness E.F."/>
            <person name="Kerlavage A.R."/>
            <person name="Bult C.J."/>
            <person name="Tomb J.-F."/>
            <person name="Dougherty B.A."/>
            <person name="Merrick J.M."/>
            <person name="McKenney K."/>
            <person name="Sutton G.G."/>
            <person name="FitzHugh W."/>
            <person name="Fields C.A."/>
            <person name="Gocayne J.D."/>
            <person name="Scott J.D."/>
            <person name="Shirley R."/>
            <person name="Liu L.-I."/>
            <person name="Glodek A."/>
            <person name="Kelley J.M."/>
            <person name="Weidman J.F."/>
            <person name="Phillips C.A."/>
            <person name="Spriggs T."/>
            <person name="Hedblom E."/>
            <person name="Cotton M.D."/>
            <person name="Utterback T.R."/>
            <person name="Hanna M.C."/>
            <person name="Nguyen D.T."/>
            <person name="Saudek D.M."/>
            <person name="Brandon R.C."/>
            <person name="Fine L.D."/>
            <person name="Fritchman J.L."/>
            <person name="Fuhrmann J.L."/>
            <person name="Geoghagen N.S.M."/>
            <person name="Gnehm C.L."/>
            <person name="McDonald L.A."/>
            <person name="Small K.V."/>
            <person name="Fraser C.M."/>
            <person name="Smith H.O."/>
            <person name="Venter J.C."/>
        </authorList>
    </citation>
    <scope>NUCLEOTIDE SEQUENCE [LARGE SCALE GENOMIC DNA]</scope>
    <source>
        <strain>ATCC 51907 / DSM 11121 / KW20 / Rd</strain>
    </source>
</reference>
<reference key="2">
    <citation type="journal article" date="2013" name="J. Biol. Chem.">
        <title>The UDP-diacylglucosamine pyrophosphohydrolase LpxH in lipid A biosynthesis utilizes Mn2+ cluster for catalysis.</title>
        <authorList>
            <person name="Young H.E."/>
            <person name="Donohue M.P."/>
            <person name="Smirnova T.I."/>
            <person name="Smirnov A.I."/>
            <person name="Zhou P."/>
        </authorList>
    </citation>
    <scope>FUNCTION</scope>
    <scope>CATALYTIC ACTIVITY</scope>
    <scope>COFACTOR</scope>
    <scope>BIOPHYSICOCHEMICAL PROPERTIES</scope>
    <scope>SUBCELLULAR LOCATION</scope>
    <scope>PATHWAY</scope>
    <scope>MUTAGENESIS OF ASP-9; HIS-11; ASP-42; ARG-81; HIS-115; ASP-117 AND HIS-196</scope>
    <source>
        <strain>ATCC 51907 / DSM 11121 / KW20 / Rd</strain>
    </source>
</reference>
<reference key="3">
    <citation type="journal article" date="2016" name="Nat. Microbiol.">
        <title>Structure of the essential Haemophilus influenzae UDP-diacylglucosamine pyrophosphohydrolase LpxH in lipid A biosynthesis.</title>
        <authorList>
            <person name="Cho J."/>
            <person name="Lee C.J."/>
            <person name="Zhao J."/>
            <person name="Young H.E."/>
            <person name="Zhou P."/>
        </authorList>
    </citation>
    <scope>X-RAY CRYSTALLOGRAPHY (2.55 ANGSTROMS) IN COMPLEX WITH ITS PRODUCT LIPID X AND MANGANESE</scope>
    <scope>COFACTOR</scope>
    <scope>REACTION MECHANISM</scope>
    <source>
        <strain>ATCC 51907 / DSM 11121 / KW20 / Rd</strain>
    </source>
</reference>
<protein>
    <recommendedName>
        <fullName evidence="1">UDP-2,3-diacylglucosamine hydrolase</fullName>
        <ecNumber evidence="1 2">3.6.1.54</ecNumber>
    </recommendedName>
    <alternativeName>
        <fullName evidence="1">UDP-2,3-diacylglucosamine diphosphatase</fullName>
    </alternativeName>
    <alternativeName>
        <fullName evidence="4">UDP-diacylglucosamine pyrophosphohydrolase</fullName>
    </alternativeName>
</protein>